<sequence length="295" mass="31981">MQIIDGKKISQDLKNELKTDVAHFQASIGKVPGLTVIIVGHDPASQVYVRNKAKSCLEIGMHSTVIEMPHDTPQETLLQAIRELNQDPAVHGILVQQPLPKQIDEFAVTLAIDPSKDVDGFHPENLGRLVMGHLDKCFVSCTPYGILELLDRYNIETKGKHCVVVGRSNIVGKPMANLMMQKLDATNCTVTVCHSATRDIPSFTKQADILIAALGKARFITADMVKPGAVVIDVGINRIEDPSTKSGYRLVGDVDYDGVAALASAITPVPGGVGPMTIAMLLKNTLQSFRRINNL</sequence>
<comment type="function">
    <text evidence="1">Catalyzes the oxidation of 5,10-methylenetetrahydrofolate to 5,10-methenyltetrahydrofolate and then the hydrolysis of 5,10-methenyltetrahydrofolate to 10-formyltetrahydrofolate.</text>
</comment>
<comment type="catalytic activity">
    <reaction evidence="1">
        <text>(6R)-5,10-methylene-5,6,7,8-tetrahydrofolate + NADP(+) = (6R)-5,10-methenyltetrahydrofolate + NADPH</text>
        <dbReference type="Rhea" id="RHEA:22812"/>
        <dbReference type="ChEBI" id="CHEBI:15636"/>
        <dbReference type="ChEBI" id="CHEBI:57455"/>
        <dbReference type="ChEBI" id="CHEBI:57783"/>
        <dbReference type="ChEBI" id="CHEBI:58349"/>
        <dbReference type="EC" id="1.5.1.5"/>
    </reaction>
</comment>
<comment type="catalytic activity">
    <reaction evidence="1">
        <text>(6R)-5,10-methenyltetrahydrofolate + H2O = (6R)-10-formyltetrahydrofolate + H(+)</text>
        <dbReference type="Rhea" id="RHEA:23700"/>
        <dbReference type="ChEBI" id="CHEBI:15377"/>
        <dbReference type="ChEBI" id="CHEBI:15378"/>
        <dbReference type="ChEBI" id="CHEBI:57455"/>
        <dbReference type="ChEBI" id="CHEBI:195366"/>
        <dbReference type="EC" id="3.5.4.9"/>
    </reaction>
</comment>
<comment type="pathway">
    <text evidence="1">One-carbon metabolism; tetrahydrofolate interconversion.</text>
</comment>
<comment type="subunit">
    <text evidence="1">Homodimer.</text>
</comment>
<comment type="similarity">
    <text evidence="1">Belongs to the tetrahydrofolate dehydrogenase/cyclohydrolase family.</text>
</comment>
<comment type="sequence caution" evidence="2">
    <conflict type="erroneous initiation">
        <sequence resource="EMBL-CDS" id="ABL65044"/>
    </conflict>
</comment>
<name>FOLD_CHLPD</name>
<protein>
    <recommendedName>
        <fullName evidence="1">Bifunctional protein FolD</fullName>
    </recommendedName>
    <domain>
        <recommendedName>
            <fullName evidence="1">Methylenetetrahydrofolate dehydrogenase</fullName>
            <ecNumber evidence="1">1.5.1.5</ecNumber>
        </recommendedName>
    </domain>
    <domain>
        <recommendedName>
            <fullName evidence="1">Methenyltetrahydrofolate cyclohydrolase</fullName>
            <ecNumber evidence="1">3.5.4.9</ecNumber>
        </recommendedName>
    </domain>
</protein>
<evidence type="ECO:0000255" key="1">
    <source>
        <dbReference type="HAMAP-Rule" id="MF_01576"/>
    </source>
</evidence>
<evidence type="ECO:0000305" key="2"/>
<accession>A1BF67</accession>
<dbReference type="EC" id="1.5.1.5" evidence="1"/>
<dbReference type="EC" id="3.5.4.9" evidence="1"/>
<dbReference type="EMBL" id="CP000492">
    <property type="protein sequence ID" value="ABL65044.1"/>
    <property type="status" value="ALT_INIT"/>
    <property type="molecule type" value="Genomic_DNA"/>
</dbReference>
<dbReference type="RefSeq" id="WP_041467558.1">
    <property type="nucleotide sequence ID" value="NC_008639.1"/>
</dbReference>
<dbReference type="SMR" id="A1BF67"/>
<dbReference type="STRING" id="290317.Cpha266_0997"/>
<dbReference type="KEGG" id="cph:Cpha266_0997"/>
<dbReference type="eggNOG" id="COG0190">
    <property type="taxonomic scope" value="Bacteria"/>
</dbReference>
<dbReference type="HOGENOM" id="CLU_034045_2_1_10"/>
<dbReference type="OrthoDB" id="9803580at2"/>
<dbReference type="UniPathway" id="UPA00193"/>
<dbReference type="Proteomes" id="UP000008701">
    <property type="component" value="Chromosome"/>
</dbReference>
<dbReference type="GO" id="GO:0005829">
    <property type="term" value="C:cytosol"/>
    <property type="evidence" value="ECO:0007669"/>
    <property type="project" value="TreeGrafter"/>
</dbReference>
<dbReference type="GO" id="GO:0004477">
    <property type="term" value="F:methenyltetrahydrofolate cyclohydrolase activity"/>
    <property type="evidence" value="ECO:0007669"/>
    <property type="project" value="UniProtKB-UniRule"/>
</dbReference>
<dbReference type="GO" id="GO:0004488">
    <property type="term" value="F:methylenetetrahydrofolate dehydrogenase (NADP+) activity"/>
    <property type="evidence" value="ECO:0007669"/>
    <property type="project" value="UniProtKB-UniRule"/>
</dbReference>
<dbReference type="GO" id="GO:0000105">
    <property type="term" value="P:L-histidine biosynthetic process"/>
    <property type="evidence" value="ECO:0007669"/>
    <property type="project" value="UniProtKB-KW"/>
</dbReference>
<dbReference type="GO" id="GO:0009086">
    <property type="term" value="P:methionine biosynthetic process"/>
    <property type="evidence" value="ECO:0007669"/>
    <property type="project" value="UniProtKB-KW"/>
</dbReference>
<dbReference type="GO" id="GO:0006164">
    <property type="term" value="P:purine nucleotide biosynthetic process"/>
    <property type="evidence" value="ECO:0007669"/>
    <property type="project" value="UniProtKB-KW"/>
</dbReference>
<dbReference type="GO" id="GO:0035999">
    <property type="term" value="P:tetrahydrofolate interconversion"/>
    <property type="evidence" value="ECO:0007669"/>
    <property type="project" value="UniProtKB-UniRule"/>
</dbReference>
<dbReference type="CDD" id="cd01080">
    <property type="entry name" value="NAD_bind_m-THF_DH_Cyclohyd"/>
    <property type="match status" value="1"/>
</dbReference>
<dbReference type="FunFam" id="3.40.50.720:FF:000189">
    <property type="entry name" value="Bifunctional protein FolD"/>
    <property type="match status" value="1"/>
</dbReference>
<dbReference type="FunFam" id="3.40.50.10860:FF:000005">
    <property type="entry name" value="C-1-tetrahydrofolate synthase, cytoplasmic, putative"/>
    <property type="match status" value="1"/>
</dbReference>
<dbReference type="Gene3D" id="3.40.50.10860">
    <property type="entry name" value="Leucine Dehydrogenase, chain A, domain 1"/>
    <property type="match status" value="1"/>
</dbReference>
<dbReference type="Gene3D" id="3.40.50.720">
    <property type="entry name" value="NAD(P)-binding Rossmann-like Domain"/>
    <property type="match status" value="1"/>
</dbReference>
<dbReference type="HAMAP" id="MF_01576">
    <property type="entry name" value="THF_DHG_CYH"/>
    <property type="match status" value="1"/>
</dbReference>
<dbReference type="InterPro" id="IPR046346">
    <property type="entry name" value="Aminoacid_DH-like_N_sf"/>
</dbReference>
<dbReference type="InterPro" id="IPR036291">
    <property type="entry name" value="NAD(P)-bd_dom_sf"/>
</dbReference>
<dbReference type="InterPro" id="IPR000672">
    <property type="entry name" value="THF_DH/CycHdrlase"/>
</dbReference>
<dbReference type="InterPro" id="IPR020630">
    <property type="entry name" value="THF_DH/CycHdrlase_cat_dom"/>
</dbReference>
<dbReference type="InterPro" id="IPR020867">
    <property type="entry name" value="THF_DH/CycHdrlase_CS"/>
</dbReference>
<dbReference type="InterPro" id="IPR020631">
    <property type="entry name" value="THF_DH/CycHdrlase_NAD-bd_dom"/>
</dbReference>
<dbReference type="NCBIfam" id="NF010771">
    <property type="entry name" value="PRK14174.1"/>
    <property type="match status" value="1"/>
</dbReference>
<dbReference type="NCBIfam" id="NF010783">
    <property type="entry name" value="PRK14186.1"/>
    <property type="match status" value="1"/>
</dbReference>
<dbReference type="PANTHER" id="PTHR48099:SF5">
    <property type="entry name" value="C-1-TETRAHYDROFOLATE SYNTHASE, CYTOPLASMIC"/>
    <property type="match status" value="1"/>
</dbReference>
<dbReference type="PANTHER" id="PTHR48099">
    <property type="entry name" value="C-1-TETRAHYDROFOLATE SYNTHASE, CYTOPLASMIC-RELATED"/>
    <property type="match status" value="1"/>
</dbReference>
<dbReference type="Pfam" id="PF00763">
    <property type="entry name" value="THF_DHG_CYH"/>
    <property type="match status" value="1"/>
</dbReference>
<dbReference type="Pfam" id="PF02882">
    <property type="entry name" value="THF_DHG_CYH_C"/>
    <property type="match status" value="1"/>
</dbReference>
<dbReference type="PRINTS" id="PR00085">
    <property type="entry name" value="THFDHDRGNASE"/>
</dbReference>
<dbReference type="SUPFAM" id="SSF53223">
    <property type="entry name" value="Aminoacid dehydrogenase-like, N-terminal domain"/>
    <property type="match status" value="1"/>
</dbReference>
<dbReference type="SUPFAM" id="SSF51735">
    <property type="entry name" value="NAD(P)-binding Rossmann-fold domains"/>
    <property type="match status" value="1"/>
</dbReference>
<dbReference type="PROSITE" id="PS00767">
    <property type="entry name" value="THF_DHG_CYH_2"/>
    <property type="match status" value="1"/>
</dbReference>
<organism>
    <name type="scientific">Chlorobium phaeobacteroides (strain DSM 266 / SMG 266 / 2430)</name>
    <dbReference type="NCBI Taxonomy" id="290317"/>
    <lineage>
        <taxon>Bacteria</taxon>
        <taxon>Pseudomonadati</taxon>
        <taxon>Chlorobiota</taxon>
        <taxon>Chlorobiia</taxon>
        <taxon>Chlorobiales</taxon>
        <taxon>Chlorobiaceae</taxon>
        <taxon>Chlorobium/Pelodictyon group</taxon>
        <taxon>Chlorobium</taxon>
    </lineage>
</organism>
<gene>
    <name evidence="1" type="primary">folD</name>
    <name type="ordered locus">Cpha266_0997</name>
</gene>
<proteinExistence type="inferred from homology"/>
<reference key="1">
    <citation type="submission" date="2006-12" db="EMBL/GenBank/DDBJ databases">
        <title>Complete sequence of Chlorobium phaeobacteroides DSM 266.</title>
        <authorList>
            <consortium name="US DOE Joint Genome Institute"/>
            <person name="Copeland A."/>
            <person name="Lucas S."/>
            <person name="Lapidus A."/>
            <person name="Barry K."/>
            <person name="Detter J.C."/>
            <person name="Glavina del Rio T."/>
            <person name="Hammon N."/>
            <person name="Israni S."/>
            <person name="Pitluck S."/>
            <person name="Goltsman E."/>
            <person name="Schmutz J."/>
            <person name="Larimer F."/>
            <person name="Land M."/>
            <person name="Hauser L."/>
            <person name="Mikhailova N."/>
            <person name="Li T."/>
            <person name="Overmann J."/>
            <person name="Bryant D.A."/>
            <person name="Richardson P."/>
        </authorList>
    </citation>
    <scope>NUCLEOTIDE SEQUENCE [LARGE SCALE GENOMIC DNA]</scope>
    <source>
        <strain>DSM 266 / SMG 266 / 2430</strain>
    </source>
</reference>
<feature type="chain" id="PRO_0000305807" description="Bifunctional protein FolD">
    <location>
        <begin position="1"/>
        <end position="295"/>
    </location>
</feature>
<feature type="binding site" evidence="1">
    <location>
        <begin position="166"/>
        <end position="168"/>
    </location>
    <ligand>
        <name>NADP(+)</name>
        <dbReference type="ChEBI" id="CHEBI:58349"/>
    </ligand>
</feature>
<feature type="binding site" evidence="1">
    <location>
        <position position="195"/>
    </location>
    <ligand>
        <name>NADP(+)</name>
        <dbReference type="ChEBI" id="CHEBI:58349"/>
    </ligand>
</feature>
<feature type="binding site" evidence="1">
    <location>
        <position position="236"/>
    </location>
    <ligand>
        <name>NADP(+)</name>
        <dbReference type="ChEBI" id="CHEBI:58349"/>
    </ligand>
</feature>
<keyword id="KW-0028">Amino-acid biosynthesis</keyword>
<keyword id="KW-0368">Histidine biosynthesis</keyword>
<keyword id="KW-0378">Hydrolase</keyword>
<keyword id="KW-0486">Methionine biosynthesis</keyword>
<keyword id="KW-0511">Multifunctional enzyme</keyword>
<keyword id="KW-0521">NADP</keyword>
<keyword id="KW-0554">One-carbon metabolism</keyword>
<keyword id="KW-0560">Oxidoreductase</keyword>
<keyword id="KW-0658">Purine biosynthesis</keyword>
<keyword id="KW-1185">Reference proteome</keyword>